<proteinExistence type="evidence at transcript level"/>
<sequence length="187" mass="20886">MEGVRPLEENVGNAPRPRFERNKLLLVASVVQALGLLLCLTYVCQHSHAPEVSLQYPPIENIMTQLQILTSHECEEDSFILPLQKRDGTMEVQNNSVVIQCDGFYLLSLKGYFSQEVSISLHYRKGEEPFPILKKTKFANSNVVLKLGYKDKVYLNVTTDSASCKQLSVNAGELIVILQNPGGYCAP</sequence>
<feature type="chain" id="PRO_0000185495" description="Tumor necrosis factor ligand superfamily member 4">
    <location>
        <begin position="1"/>
        <end position="187"/>
    </location>
</feature>
<feature type="topological domain" description="Cytoplasmic" evidence="2">
    <location>
        <begin position="1"/>
        <end position="23"/>
    </location>
</feature>
<feature type="transmembrane region" description="Helical; Signal-anchor for type II membrane protein" evidence="2">
    <location>
        <begin position="24"/>
        <end position="44"/>
    </location>
</feature>
<feature type="topological domain" description="Extracellular" evidence="2">
    <location>
        <begin position="45"/>
        <end position="187"/>
    </location>
</feature>
<feature type="domain" description="THD" evidence="3">
    <location>
        <begin position="58"/>
        <end position="177"/>
    </location>
</feature>
<feature type="glycosylation site" description="N-linked (GlcNAc...) asparagine" evidence="2">
    <location>
        <position position="94"/>
    </location>
</feature>
<feature type="glycosylation site" description="N-linked (GlcNAc...) asparagine" evidence="2">
    <location>
        <position position="156"/>
    </location>
</feature>
<feature type="disulfide bond" evidence="3">
    <location>
        <begin position="74"/>
        <end position="164"/>
    </location>
</feature>
<feature type="disulfide bond" evidence="1">
    <location>
        <begin position="101"/>
        <end position="185"/>
    </location>
</feature>
<protein>
    <recommendedName>
        <fullName>Tumor necrosis factor ligand superfamily member 4</fullName>
    </recommendedName>
    <alternativeName>
        <fullName>OX40 ligand</fullName>
        <shortName>OX40L</shortName>
    </alternativeName>
    <cdAntigenName>CD252</cdAntigenName>
</protein>
<dbReference type="EMBL" id="AB003912">
    <property type="protein sequence ID" value="BAA20060.1"/>
    <property type="molecule type" value="mRNA"/>
</dbReference>
<dbReference type="RefSeq" id="NP_001075454.1">
    <property type="nucleotide sequence ID" value="NM_001081985.1"/>
</dbReference>
<dbReference type="SMR" id="O02765"/>
<dbReference type="FunCoup" id="O02765">
    <property type="interactions" value="12"/>
</dbReference>
<dbReference type="STRING" id="9986.ENSOCUP00000007420"/>
<dbReference type="GlyCosmos" id="O02765">
    <property type="glycosylation" value="2 sites, No reported glycans"/>
</dbReference>
<dbReference type="PaxDb" id="9986-ENSOCUP00000007420"/>
<dbReference type="GeneID" id="100008595"/>
<dbReference type="KEGG" id="ocu:100008595"/>
<dbReference type="CTD" id="7292"/>
<dbReference type="eggNOG" id="ENOG502ST4X">
    <property type="taxonomic scope" value="Eukaryota"/>
</dbReference>
<dbReference type="InParanoid" id="O02765"/>
<dbReference type="OrthoDB" id="9424588at2759"/>
<dbReference type="TreeFam" id="TF336384"/>
<dbReference type="Proteomes" id="UP000001811">
    <property type="component" value="Unplaced"/>
</dbReference>
<dbReference type="GO" id="GO:0005615">
    <property type="term" value="C:extracellular space"/>
    <property type="evidence" value="ECO:0007669"/>
    <property type="project" value="UniProtKB-KW"/>
</dbReference>
<dbReference type="GO" id="GO:0016020">
    <property type="term" value="C:membrane"/>
    <property type="evidence" value="ECO:0007669"/>
    <property type="project" value="UniProtKB-SubCell"/>
</dbReference>
<dbReference type="GO" id="GO:0005125">
    <property type="term" value="F:cytokine activity"/>
    <property type="evidence" value="ECO:0007669"/>
    <property type="project" value="UniProtKB-KW"/>
</dbReference>
<dbReference type="GO" id="GO:0005164">
    <property type="term" value="F:tumor necrosis factor receptor binding"/>
    <property type="evidence" value="ECO:0007669"/>
    <property type="project" value="InterPro"/>
</dbReference>
<dbReference type="GO" id="GO:0006955">
    <property type="term" value="P:immune response"/>
    <property type="evidence" value="ECO:0007669"/>
    <property type="project" value="InterPro"/>
</dbReference>
<dbReference type="GO" id="GO:0006954">
    <property type="term" value="P:inflammatory response"/>
    <property type="evidence" value="ECO:0007669"/>
    <property type="project" value="TreeGrafter"/>
</dbReference>
<dbReference type="GO" id="GO:0001819">
    <property type="term" value="P:positive regulation of cytokine production"/>
    <property type="evidence" value="ECO:0007669"/>
    <property type="project" value="TreeGrafter"/>
</dbReference>
<dbReference type="GO" id="GO:0042102">
    <property type="term" value="P:positive regulation of T cell proliferation"/>
    <property type="evidence" value="ECO:0007669"/>
    <property type="project" value="TreeGrafter"/>
</dbReference>
<dbReference type="CDD" id="cd00184">
    <property type="entry name" value="TNF"/>
    <property type="match status" value="1"/>
</dbReference>
<dbReference type="FunFam" id="2.60.120.40:FF:000025">
    <property type="entry name" value="tumor necrosis factor ligand superfamily member 4"/>
    <property type="match status" value="1"/>
</dbReference>
<dbReference type="Gene3D" id="2.60.120.40">
    <property type="match status" value="1"/>
</dbReference>
<dbReference type="InterPro" id="IPR021184">
    <property type="entry name" value="TNF_CS"/>
</dbReference>
<dbReference type="InterPro" id="IPR006052">
    <property type="entry name" value="TNF_dom"/>
</dbReference>
<dbReference type="InterPro" id="IPR042338">
    <property type="entry name" value="TNFSF4"/>
</dbReference>
<dbReference type="InterPro" id="IPR008983">
    <property type="entry name" value="Tumour_necrosis_fac-like_dom"/>
</dbReference>
<dbReference type="PANTHER" id="PTHR17534">
    <property type="entry name" value="OX40 LIGAND"/>
    <property type="match status" value="1"/>
</dbReference>
<dbReference type="PANTHER" id="PTHR17534:SF4">
    <property type="entry name" value="TUMOR NECROSIS FACTOR LIGAND SUPERFAMILY MEMBER 4"/>
    <property type="match status" value="1"/>
</dbReference>
<dbReference type="SMART" id="SM00207">
    <property type="entry name" value="TNF"/>
    <property type="match status" value="1"/>
</dbReference>
<dbReference type="SUPFAM" id="SSF49842">
    <property type="entry name" value="TNF-like"/>
    <property type="match status" value="1"/>
</dbReference>
<dbReference type="PROSITE" id="PS00251">
    <property type="entry name" value="THD_1"/>
    <property type="match status" value="1"/>
</dbReference>
<dbReference type="PROSITE" id="PS50049">
    <property type="entry name" value="THD_2"/>
    <property type="match status" value="1"/>
</dbReference>
<keyword id="KW-0202">Cytokine</keyword>
<keyword id="KW-1015">Disulfide bond</keyword>
<keyword id="KW-0325">Glycoprotein</keyword>
<keyword id="KW-0472">Membrane</keyword>
<keyword id="KW-1185">Reference proteome</keyword>
<keyword id="KW-0735">Signal-anchor</keyword>
<keyword id="KW-0812">Transmembrane</keyword>
<keyword id="KW-1133">Transmembrane helix</keyword>
<accession>O02765</accession>
<organism>
    <name type="scientific">Oryctolagus cuniculus</name>
    <name type="common">Rabbit</name>
    <dbReference type="NCBI Taxonomy" id="9986"/>
    <lineage>
        <taxon>Eukaryota</taxon>
        <taxon>Metazoa</taxon>
        <taxon>Chordata</taxon>
        <taxon>Craniata</taxon>
        <taxon>Vertebrata</taxon>
        <taxon>Euteleostomi</taxon>
        <taxon>Mammalia</taxon>
        <taxon>Eutheria</taxon>
        <taxon>Euarchontoglires</taxon>
        <taxon>Glires</taxon>
        <taxon>Lagomorpha</taxon>
        <taxon>Leporidae</taxon>
        <taxon>Oryctolagus</taxon>
    </lineage>
</organism>
<name>TNFL4_RABIT</name>
<evidence type="ECO:0000250" key="1"/>
<evidence type="ECO:0000255" key="2"/>
<evidence type="ECO:0000255" key="3">
    <source>
        <dbReference type="PROSITE-ProRule" id="PRU01387"/>
    </source>
</evidence>
<evidence type="ECO:0000305" key="4"/>
<reference key="1">
    <citation type="submission" date="1997-05" db="EMBL/GenBank/DDBJ databases">
        <title>Expression of OX40 and OX40 ligand genes in rabbit HTLV-I-transformed T cell lines.</title>
        <authorList>
            <person name="Isono T."/>
            <person name="Seto A."/>
        </authorList>
    </citation>
    <scope>NUCLEOTIDE SEQUENCE [MRNA]</scope>
    <source>
        <strain>CHBB:HM</strain>
    </source>
</reference>
<gene>
    <name type="primary">TNFSF4</name>
    <name type="synonym">TXGP1</name>
</gene>
<comment type="function">
    <text>Cytokine that binds to TNFRSF4. Co-stimulates T-cell proliferation and cytokine production.</text>
</comment>
<comment type="subunit">
    <text evidence="4">Homotrimer.</text>
</comment>
<comment type="subcellular location">
    <subcellularLocation>
        <location>Membrane</location>
        <topology>Single-pass type II membrane protein</topology>
    </subcellularLocation>
</comment>
<comment type="similarity">
    <text evidence="4">Belongs to the tumor necrosis factor family.</text>
</comment>